<protein>
    <recommendedName>
        <fullName evidence="2">Formamidopyrimidine-DNA glycosylase</fullName>
        <shortName evidence="2">Fapy-DNA glycosylase</shortName>
        <ecNumber evidence="2">3.2.2.23</ecNumber>
    </recommendedName>
    <alternativeName>
        <fullName evidence="2">DNA-(apurinic or apyrimidinic site) lyase MutM</fullName>
        <shortName evidence="2">AP lyase MutM</shortName>
        <ecNumber evidence="2">4.2.99.18</ecNumber>
    </alternativeName>
</protein>
<dbReference type="EC" id="3.2.2.23" evidence="2"/>
<dbReference type="EC" id="4.2.99.18" evidence="2"/>
<dbReference type="EMBL" id="AM408590">
    <property type="protein sequence ID" value="CAL72935.1"/>
    <property type="molecule type" value="Genomic_DNA"/>
</dbReference>
<dbReference type="RefSeq" id="WP_003414814.1">
    <property type="nucleotide sequence ID" value="NC_008769.1"/>
</dbReference>
<dbReference type="SMR" id="A1KMR9"/>
<dbReference type="GeneID" id="45426912"/>
<dbReference type="KEGG" id="mbb:BCG_2946c"/>
<dbReference type="HOGENOM" id="CLU_038423_1_2_11"/>
<dbReference type="Proteomes" id="UP000001472">
    <property type="component" value="Chromosome"/>
</dbReference>
<dbReference type="GO" id="GO:0034039">
    <property type="term" value="F:8-oxo-7,8-dihydroguanine DNA N-glycosylase activity"/>
    <property type="evidence" value="ECO:0007669"/>
    <property type="project" value="TreeGrafter"/>
</dbReference>
<dbReference type="GO" id="GO:0140078">
    <property type="term" value="F:class I DNA-(apurinic or apyrimidinic site) endonuclease activity"/>
    <property type="evidence" value="ECO:0007669"/>
    <property type="project" value="UniProtKB-EC"/>
</dbReference>
<dbReference type="GO" id="GO:0003684">
    <property type="term" value="F:damaged DNA binding"/>
    <property type="evidence" value="ECO:0007669"/>
    <property type="project" value="InterPro"/>
</dbReference>
<dbReference type="GO" id="GO:0008270">
    <property type="term" value="F:zinc ion binding"/>
    <property type="evidence" value="ECO:0007669"/>
    <property type="project" value="UniProtKB-UniRule"/>
</dbReference>
<dbReference type="GO" id="GO:0006284">
    <property type="term" value="P:base-excision repair"/>
    <property type="evidence" value="ECO:0007669"/>
    <property type="project" value="InterPro"/>
</dbReference>
<dbReference type="CDD" id="cd08966">
    <property type="entry name" value="EcFpg-like_N"/>
    <property type="match status" value="1"/>
</dbReference>
<dbReference type="FunFam" id="1.10.8.50:FF:000003">
    <property type="entry name" value="Formamidopyrimidine-DNA glycosylase"/>
    <property type="match status" value="1"/>
</dbReference>
<dbReference type="FunFam" id="3.20.190.10:FF:000006">
    <property type="entry name" value="Formamidopyrimidine-DNA glycosylase"/>
    <property type="match status" value="1"/>
</dbReference>
<dbReference type="Gene3D" id="1.10.8.50">
    <property type="match status" value="1"/>
</dbReference>
<dbReference type="Gene3D" id="3.20.190.10">
    <property type="entry name" value="MutM-like, N-terminal"/>
    <property type="match status" value="1"/>
</dbReference>
<dbReference type="HAMAP" id="MF_00103">
    <property type="entry name" value="Fapy_DNA_glycosyl"/>
    <property type="match status" value="1"/>
</dbReference>
<dbReference type="InterPro" id="IPR015886">
    <property type="entry name" value="DNA_glyclase/AP_lyase_DNA-bd"/>
</dbReference>
<dbReference type="InterPro" id="IPR015887">
    <property type="entry name" value="DNA_glyclase_Znf_dom_DNA_BS"/>
</dbReference>
<dbReference type="InterPro" id="IPR020629">
    <property type="entry name" value="Formamido-pyr_DNA_Glyclase"/>
</dbReference>
<dbReference type="InterPro" id="IPR012319">
    <property type="entry name" value="FPG_cat"/>
</dbReference>
<dbReference type="InterPro" id="IPR035937">
    <property type="entry name" value="MutM-like_N-ter"/>
</dbReference>
<dbReference type="InterPro" id="IPR010979">
    <property type="entry name" value="Ribosomal_uS13-like_H2TH"/>
</dbReference>
<dbReference type="InterPro" id="IPR000214">
    <property type="entry name" value="Znf_DNA_glyclase/AP_lyase"/>
</dbReference>
<dbReference type="InterPro" id="IPR010663">
    <property type="entry name" value="Znf_FPG/IleRS"/>
</dbReference>
<dbReference type="NCBIfam" id="TIGR00577">
    <property type="entry name" value="fpg"/>
    <property type="match status" value="1"/>
</dbReference>
<dbReference type="NCBIfam" id="NF002211">
    <property type="entry name" value="PRK01103.1"/>
    <property type="match status" value="1"/>
</dbReference>
<dbReference type="PANTHER" id="PTHR22993">
    <property type="entry name" value="FORMAMIDOPYRIMIDINE-DNA GLYCOSYLASE"/>
    <property type="match status" value="1"/>
</dbReference>
<dbReference type="PANTHER" id="PTHR22993:SF9">
    <property type="entry name" value="FORMAMIDOPYRIMIDINE-DNA GLYCOSYLASE"/>
    <property type="match status" value="1"/>
</dbReference>
<dbReference type="Pfam" id="PF01149">
    <property type="entry name" value="Fapy_DNA_glyco"/>
    <property type="match status" value="1"/>
</dbReference>
<dbReference type="Pfam" id="PF06831">
    <property type="entry name" value="H2TH"/>
    <property type="match status" value="1"/>
</dbReference>
<dbReference type="Pfam" id="PF06827">
    <property type="entry name" value="zf-FPG_IleRS"/>
    <property type="match status" value="1"/>
</dbReference>
<dbReference type="SMART" id="SM00898">
    <property type="entry name" value="Fapy_DNA_glyco"/>
    <property type="match status" value="1"/>
</dbReference>
<dbReference type="SMART" id="SM01232">
    <property type="entry name" value="H2TH"/>
    <property type="match status" value="1"/>
</dbReference>
<dbReference type="SUPFAM" id="SSF57716">
    <property type="entry name" value="Glucocorticoid receptor-like (DNA-binding domain)"/>
    <property type="match status" value="1"/>
</dbReference>
<dbReference type="SUPFAM" id="SSF81624">
    <property type="entry name" value="N-terminal domain of MutM-like DNA repair proteins"/>
    <property type="match status" value="1"/>
</dbReference>
<dbReference type="SUPFAM" id="SSF46946">
    <property type="entry name" value="S13-like H2TH domain"/>
    <property type="match status" value="1"/>
</dbReference>
<dbReference type="PROSITE" id="PS51068">
    <property type="entry name" value="FPG_CAT"/>
    <property type="match status" value="1"/>
</dbReference>
<dbReference type="PROSITE" id="PS01242">
    <property type="entry name" value="ZF_FPG_1"/>
    <property type="match status" value="1"/>
</dbReference>
<dbReference type="PROSITE" id="PS51066">
    <property type="entry name" value="ZF_FPG_2"/>
    <property type="match status" value="1"/>
</dbReference>
<sequence length="289" mass="31951">MPELPEVEVVRRGLQAHVTGRTITEVRVHHPRAVRRHDAGPADLTARLRGARINGTDRRGKYLWLTLNTAGVHRPTDTALVVHLGMSGQMLLGAVPCAAHVRISALLDDGTVLSFADQRTFGGWLLADLVTVDGSVVPVPVAHLARDPLDPRFDCDAVVKVLRRKHSELKRQLLDQRVVSGIGNIYADEALWRAKVNGAHVAATLRCRRLGAVLHAAADVMREALAKGGTSFDSLYVNVNGESGYFERSLDAYGREGENCRRCGAVIRRERFMNRSSFYCPRCQPRPRK</sequence>
<feature type="initiator methionine" description="Removed" evidence="1">
    <location>
        <position position="1"/>
    </location>
</feature>
<feature type="chain" id="PRO_1000008718" description="Formamidopyrimidine-DNA glycosylase">
    <location>
        <begin position="2"/>
        <end position="289"/>
    </location>
</feature>
<feature type="zinc finger region" description="FPG-type" evidence="2">
    <location>
        <begin position="251"/>
        <end position="285"/>
    </location>
</feature>
<feature type="active site" description="Schiff-base intermediate with DNA" evidence="2">
    <location>
        <position position="2"/>
    </location>
</feature>
<feature type="active site" description="Proton donor" evidence="2">
    <location>
        <position position="3"/>
    </location>
</feature>
<feature type="active site" description="Proton donor; for beta-elimination activity" evidence="2">
    <location>
        <position position="61"/>
    </location>
</feature>
<feature type="active site" description="Proton donor; for delta-elimination activity" evidence="2">
    <location>
        <position position="275"/>
    </location>
</feature>
<feature type="binding site" evidence="2">
    <location>
        <position position="100"/>
    </location>
    <ligand>
        <name>DNA</name>
        <dbReference type="ChEBI" id="CHEBI:16991"/>
    </ligand>
</feature>
<feature type="binding site" evidence="2">
    <location>
        <position position="119"/>
    </location>
    <ligand>
        <name>DNA</name>
        <dbReference type="ChEBI" id="CHEBI:16991"/>
    </ligand>
</feature>
<feature type="binding site" evidence="2">
    <location>
        <position position="165"/>
    </location>
    <ligand>
        <name>DNA</name>
        <dbReference type="ChEBI" id="CHEBI:16991"/>
    </ligand>
</feature>
<organism>
    <name type="scientific">Mycobacterium bovis (strain BCG / Pasteur 1173P2)</name>
    <dbReference type="NCBI Taxonomy" id="410289"/>
    <lineage>
        <taxon>Bacteria</taxon>
        <taxon>Bacillati</taxon>
        <taxon>Actinomycetota</taxon>
        <taxon>Actinomycetes</taxon>
        <taxon>Mycobacteriales</taxon>
        <taxon>Mycobacteriaceae</taxon>
        <taxon>Mycobacterium</taxon>
        <taxon>Mycobacterium tuberculosis complex</taxon>
    </lineage>
</organism>
<accession>A1KMR9</accession>
<reference key="1">
    <citation type="journal article" date="2007" name="Proc. Natl. Acad. Sci. U.S.A.">
        <title>Genome plasticity of BCG and impact on vaccine efficacy.</title>
        <authorList>
            <person name="Brosch R."/>
            <person name="Gordon S.V."/>
            <person name="Garnier T."/>
            <person name="Eiglmeier K."/>
            <person name="Frigui W."/>
            <person name="Valenti P."/>
            <person name="Dos Santos S."/>
            <person name="Duthoy S."/>
            <person name="Lacroix C."/>
            <person name="Garcia-Pelayo C."/>
            <person name="Inwald J.K."/>
            <person name="Golby P."/>
            <person name="Garcia J.N."/>
            <person name="Hewinson R.G."/>
            <person name="Behr M.A."/>
            <person name="Quail M.A."/>
            <person name="Churcher C."/>
            <person name="Barrell B.G."/>
            <person name="Parkhill J."/>
            <person name="Cole S.T."/>
        </authorList>
    </citation>
    <scope>NUCLEOTIDE SEQUENCE [LARGE SCALE GENOMIC DNA]</scope>
    <source>
        <strain>BCG / Pasteur 1173P2</strain>
    </source>
</reference>
<keyword id="KW-0227">DNA damage</keyword>
<keyword id="KW-0234">DNA repair</keyword>
<keyword id="KW-0238">DNA-binding</keyword>
<keyword id="KW-0326">Glycosidase</keyword>
<keyword id="KW-0378">Hydrolase</keyword>
<keyword id="KW-0456">Lyase</keyword>
<keyword id="KW-0479">Metal-binding</keyword>
<keyword id="KW-0511">Multifunctional enzyme</keyword>
<keyword id="KW-0862">Zinc</keyword>
<keyword id="KW-0863">Zinc-finger</keyword>
<evidence type="ECO:0000250" key="1"/>
<evidence type="ECO:0000255" key="2">
    <source>
        <dbReference type="HAMAP-Rule" id="MF_00103"/>
    </source>
</evidence>
<proteinExistence type="inferred from homology"/>
<gene>
    <name evidence="2" type="primary">mutM</name>
    <name evidence="2" type="synonym">fpg</name>
    <name type="ordered locus">BCG_2946c</name>
</gene>
<comment type="function">
    <text evidence="2">Involved in base excision repair of DNA damaged by oxidation or by mutagenic agents. Acts as a DNA glycosylase that recognizes and removes damaged bases. Has a preference for oxidized purines, such as 7,8-dihydro-8-oxoguanine (8-oxoG). Has AP (apurinic/apyrimidinic) lyase activity and introduces nicks in the DNA strand. Cleaves the DNA backbone by beta-delta elimination to generate a single-strand break at the site of the removed base with both 3'- and 5'-phosphates.</text>
</comment>
<comment type="catalytic activity">
    <reaction evidence="2">
        <text>Hydrolysis of DNA containing ring-opened 7-methylguanine residues, releasing 2,6-diamino-4-hydroxy-5-(N-methyl)formamidopyrimidine.</text>
        <dbReference type="EC" id="3.2.2.23"/>
    </reaction>
</comment>
<comment type="catalytic activity">
    <reaction evidence="2">
        <text>2'-deoxyribonucleotide-(2'-deoxyribose 5'-phosphate)-2'-deoxyribonucleotide-DNA = a 3'-end 2'-deoxyribonucleotide-(2,3-dehydro-2,3-deoxyribose 5'-phosphate)-DNA + a 5'-end 5'-phospho-2'-deoxyribonucleoside-DNA + H(+)</text>
        <dbReference type="Rhea" id="RHEA:66592"/>
        <dbReference type="Rhea" id="RHEA-COMP:13180"/>
        <dbReference type="Rhea" id="RHEA-COMP:16897"/>
        <dbReference type="Rhea" id="RHEA-COMP:17067"/>
        <dbReference type="ChEBI" id="CHEBI:15378"/>
        <dbReference type="ChEBI" id="CHEBI:136412"/>
        <dbReference type="ChEBI" id="CHEBI:157695"/>
        <dbReference type="ChEBI" id="CHEBI:167181"/>
        <dbReference type="EC" id="4.2.99.18"/>
    </reaction>
</comment>
<comment type="cofactor">
    <cofactor evidence="2">
        <name>Zn(2+)</name>
        <dbReference type="ChEBI" id="CHEBI:29105"/>
    </cofactor>
    <text evidence="2">Binds 1 zinc ion per subunit.</text>
</comment>
<comment type="subunit">
    <text evidence="2">Monomer.</text>
</comment>
<comment type="similarity">
    <text evidence="2">Belongs to the FPG family.</text>
</comment>
<name>FPG_MYCBP</name>